<comment type="catalytic activity">
    <reaction evidence="1">
        <text>tRNA(Arg) + L-arginine + ATP = L-arginyl-tRNA(Arg) + AMP + diphosphate</text>
        <dbReference type="Rhea" id="RHEA:20301"/>
        <dbReference type="Rhea" id="RHEA-COMP:9658"/>
        <dbReference type="Rhea" id="RHEA-COMP:9673"/>
        <dbReference type="ChEBI" id="CHEBI:30616"/>
        <dbReference type="ChEBI" id="CHEBI:32682"/>
        <dbReference type="ChEBI" id="CHEBI:33019"/>
        <dbReference type="ChEBI" id="CHEBI:78442"/>
        <dbReference type="ChEBI" id="CHEBI:78513"/>
        <dbReference type="ChEBI" id="CHEBI:456215"/>
        <dbReference type="EC" id="6.1.1.19"/>
    </reaction>
</comment>
<comment type="subunit">
    <text evidence="1">Monomer.</text>
</comment>
<comment type="subcellular location">
    <subcellularLocation>
        <location evidence="1">Cytoplasm</location>
    </subcellularLocation>
</comment>
<comment type="similarity">
    <text evidence="1">Belongs to the class-I aminoacyl-tRNA synthetase family.</text>
</comment>
<name>SYR_CHESB</name>
<sequence length="585" mass="64750">MNIFADFSDRIINAVKALELKPKEGGELDLSRVAVEPPRDPSHGDIATNAAMVLSKAVGENPRALGERLAAALAEDPDVAEASVAGPGFVNLRLGNGFWHARLGEMLLLAGDYGRSKMGNGHKVNVEYVSANPTGPMHVGHCRGAVVGDALSNLLAFAGYDVTREYYINDAGAQIDVLGRSVLMRYREALGEDIGQIPEGLYPGDYLKPVGKALADEYGTKLLERPAEEALKIAKDTAIDAMMAMIREDLAALNVHHDVFFSERSLHAGNGGTIRSAINDLTLKGHVYKGKLPPPKGQVLEDWEDREQTLFRSTDVGDDIDRPLIKSDGTFTYFAADVAYMKDKYSRGFEHLIYVLGADHGGYVKRLEALARAISEGKLHLTVLLCQLVKLFRNGEPVRMSKRAGEFVTLRDVIDEVGRDAVRFMMLYRKSDAPLDFDFAKVTEQSKDNPVFYVQYASARCHSVFRQASEQLNVRKFDREAMKAALHRLDDPGEIALIRKLAEYPRLIESAAQALEPHRLAFYLYELANQFHVQWNRGSETDRLRFVKVNDPELTHARLGLVQAVCDVVRSGLALVGADAPEEMR</sequence>
<proteinExistence type="inferred from homology"/>
<protein>
    <recommendedName>
        <fullName evidence="1">Arginine--tRNA ligase</fullName>
        <ecNumber evidence="1">6.1.1.19</ecNumber>
    </recommendedName>
    <alternativeName>
        <fullName evidence="1">Arginyl-tRNA synthetase</fullName>
        <shortName evidence="1">ArgRS</shortName>
    </alternativeName>
</protein>
<organism>
    <name type="scientific">Chelativorans sp. (strain BNC1)</name>
    <dbReference type="NCBI Taxonomy" id="266779"/>
    <lineage>
        <taxon>Bacteria</taxon>
        <taxon>Pseudomonadati</taxon>
        <taxon>Pseudomonadota</taxon>
        <taxon>Alphaproteobacteria</taxon>
        <taxon>Hyphomicrobiales</taxon>
        <taxon>Phyllobacteriaceae</taxon>
        <taxon>Chelativorans</taxon>
    </lineage>
</organism>
<dbReference type="EC" id="6.1.1.19" evidence="1"/>
<dbReference type="EMBL" id="CP000390">
    <property type="protein sequence ID" value="ABG63207.1"/>
    <property type="molecule type" value="Genomic_DNA"/>
</dbReference>
<dbReference type="SMR" id="Q11HB8"/>
<dbReference type="STRING" id="266779.Meso_1813"/>
<dbReference type="KEGG" id="mes:Meso_1813"/>
<dbReference type="eggNOG" id="COG0018">
    <property type="taxonomic scope" value="Bacteria"/>
</dbReference>
<dbReference type="HOGENOM" id="CLU_006406_0_1_5"/>
<dbReference type="OrthoDB" id="9803211at2"/>
<dbReference type="GO" id="GO:0005737">
    <property type="term" value="C:cytoplasm"/>
    <property type="evidence" value="ECO:0007669"/>
    <property type="project" value="UniProtKB-SubCell"/>
</dbReference>
<dbReference type="GO" id="GO:0004814">
    <property type="term" value="F:arginine-tRNA ligase activity"/>
    <property type="evidence" value="ECO:0007669"/>
    <property type="project" value="UniProtKB-UniRule"/>
</dbReference>
<dbReference type="GO" id="GO:0005524">
    <property type="term" value="F:ATP binding"/>
    <property type="evidence" value="ECO:0007669"/>
    <property type="project" value="UniProtKB-UniRule"/>
</dbReference>
<dbReference type="GO" id="GO:0006420">
    <property type="term" value="P:arginyl-tRNA aminoacylation"/>
    <property type="evidence" value="ECO:0007669"/>
    <property type="project" value="UniProtKB-UniRule"/>
</dbReference>
<dbReference type="CDD" id="cd00671">
    <property type="entry name" value="ArgRS_core"/>
    <property type="match status" value="1"/>
</dbReference>
<dbReference type="FunFam" id="1.10.730.10:FF:000008">
    <property type="entry name" value="Arginine--tRNA ligase"/>
    <property type="match status" value="1"/>
</dbReference>
<dbReference type="FunFam" id="3.40.50.620:FF:000062">
    <property type="entry name" value="Arginine--tRNA ligase"/>
    <property type="match status" value="1"/>
</dbReference>
<dbReference type="Gene3D" id="3.30.1360.70">
    <property type="entry name" value="Arginyl tRNA synthetase N-terminal domain"/>
    <property type="match status" value="1"/>
</dbReference>
<dbReference type="Gene3D" id="3.40.50.620">
    <property type="entry name" value="HUPs"/>
    <property type="match status" value="1"/>
</dbReference>
<dbReference type="Gene3D" id="1.10.730.10">
    <property type="entry name" value="Isoleucyl-tRNA Synthetase, Domain 1"/>
    <property type="match status" value="1"/>
</dbReference>
<dbReference type="HAMAP" id="MF_00123">
    <property type="entry name" value="Arg_tRNA_synth"/>
    <property type="match status" value="1"/>
</dbReference>
<dbReference type="InterPro" id="IPR001412">
    <property type="entry name" value="aa-tRNA-synth_I_CS"/>
</dbReference>
<dbReference type="InterPro" id="IPR001278">
    <property type="entry name" value="Arg-tRNA-ligase"/>
</dbReference>
<dbReference type="InterPro" id="IPR005148">
    <property type="entry name" value="Arg-tRNA-synth_N"/>
</dbReference>
<dbReference type="InterPro" id="IPR036695">
    <property type="entry name" value="Arg-tRNA-synth_N_sf"/>
</dbReference>
<dbReference type="InterPro" id="IPR035684">
    <property type="entry name" value="ArgRS_core"/>
</dbReference>
<dbReference type="InterPro" id="IPR008909">
    <property type="entry name" value="DALR_anticod-bd"/>
</dbReference>
<dbReference type="InterPro" id="IPR014729">
    <property type="entry name" value="Rossmann-like_a/b/a_fold"/>
</dbReference>
<dbReference type="InterPro" id="IPR009080">
    <property type="entry name" value="tRNAsynth_Ia_anticodon-bd"/>
</dbReference>
<dbReference type="NCBIfam" id="TIGR00456">
    <property type="entry name" value="argS"/>
    <property type="match status" value="1"/>
</dbReference>
<dbReference type="PANTHER" id="PTHR11956:SF5">
    <property type="entry name" value="ARGININE--TRNA LIGASE, CYTOPLASMIC"/>
    <property type="match status" value="1"/>
</dbReference>
<dbReference type="PANTHER" id="PTHR11956">
    <property type="entry name" value="ARGINYL-TRNA SYNTHETASE"/>
    <property type="match status" value="1"/>
</dbReference>
<dbReference type="Pfam" id="PF03485">
    <property type="entry name" value="Arg_tRNA_synt_N"/>
    <property type="match status" value="1"/>
</dbReference>
<dbReference type="Pfam" id="PF05746">
    <property type="entry name" value="DALR_1"/>
    <property type="match status" value="1"/>
</dbReference>
<dbReference type="Pfam" id="PF00750">
    <property type="entry name" value="tRNA-synt_1d"/>
    <property type="match status" value="2"/>
</dbReference>
<dbReference type="PRINTS" id="PR01038">
    <property type="entry name" value="TRNASYNTHARG"/>
</dbReference>
<dbReference type="SMART" id="SM01016">
    <property type="entry name" value="Arg_tRNA_synt_N"/>
    <property type="match status" value="1"/>
</dbReference>
<dbReference type="SMART" id="SM00836">
    <property type="entry name" value="DALR_1"/>
    <property type="match status" value="1"/>
</dbReference>
<dbReference type="SUPFAM" id="SSF47323">
    <property type="entry name" value="Anticodon-binding domain of a subclass of class I aminoacyl-tRNA synthetases"/>
    <property type="match status" value="1"/>
</dbReference>
<dbReference type="SUPFAM" id="SSF55190">
    <property type="entry name" value="Arginyl-tRNA synthetase (ArgRS), N-terminal 'additional' domain"/>
    <property type="match status" value="1"/>
</dbReference>
<dbReference type="SUPFAM" id="SSF52374">
    <property type="entry name" value="Nucleotidylyl transferase"/>
    <property type="match status" value="1"/>
</dbReference>
<dbReference type="PROSITE" id="PS00178">
    <property type="entry name" value="AA_TRNA_LIGASE_I"/>
    <property type="match status" value="1"/>
</dbReference>
<evidence type="ECO:0000255" key="1">
    <source>
        <dbReference type="HAMAP-Rule" id="MF_00123"/>
    </source>
</evidence>
<reference key="1">
    <citation type="submission" date="2006-06" db="EMBL/GenBank/DDBJ databases">
        <title>Complete sequence of chromosome of Mesorhizobium sp. BNC1.</title>
        <authorList>
            <consortium name="US DOE Joint Genome Institute"/>
            <person name="Copeland A."/>
            <person name="Lucas S."/>
            <person name="Lapidus A."/>
            <person name="Barry K."/>
            <person name="Detter J.C."/>
            <person name="Glavina del Rio T."/>
            <person name="Hammon N."/>
            <person name="Israni S."/>
            <person name="Dalin E."/>
            <person name="Tice H."/>
            <person name="Pitluck S."/>
            <person name="Chertkov O."/>
            <person name="Brettin T."/>
            <person name="Bruce D."/>
            <person name="Han C."/>
            <person name="Tapia R."/>
            <person name="Gilna P."/>
            <person name="Schmutz J."/>
            <person name="Larimer F."/>
            <person name="Land M."/>
            <person name="Hauser L."/>
            <person name="Kyrpides N."/>
            <person name="Mikhailova N."/>
            <person name="Richardson P."/>
        </authorList>
    </citation>
    <scope>NUCLEOTIDE SEQUENCE [LARGE SCALE GENOMIC DNA]</scope>
    <source>
        <strain>BNC1</strain>
    </source>
</reference>
<gene>
    <name evidence="1" type="primary">argS</name>
    <name type="ordered locus">Meso_1813</name>
</gene>
<feature type="chain" id="PRO_1000018057" description="Arginine--tRNA ligase">
    <location>
        <begin position="1"/>
        <end position="585"/>
    </location>
</feature>
<feature type="short sequence motif" description="'HIGH' region">
    <location>
        <begin position="131"/>
        <end position="141"/>
    </location>
</feature>
<keyword id="KW-0030">Aminoacyl-tRNA synthetase</keyword>
<keyword id="KW-0067">ATP-binding</keyword>
<keyword id="KW-0963">Cytoplasm</keyword>
<keyword id="KW-0436">Ligase</keyword>
<keyword id="KW-0547">Nucleotide-binding</keyword>
<keyword id="KW-0648">Protein biosynthesis</keyword>
<accession>Q11HB8</accession>